<reference key="1">
    <citation type="journal article" date="2004" name="PLoS Biol.">
        <title>Genomic insights into methanotrophy: the complete genome sequence of Methylococcus capsulatus (Bath).</title>
        <authorList>
            <person name="Ward N.L."/>
            <person name="Larsen O."/>
            <person name="Sakwa J."/>
            <person name="Bruseth L."/>
            <person name="Khouri H.M."/>
            <person name="Durkin A.S."/>
            <person name="Dimitrov G."/>
            <person name="Jiang L."/>
            <person name="Scanlan D."/>
            <person name="Kang K.H."/>
            <person name="Lewis M.R."/>
            <person name="Nelson K.E."/>
            <person name="Methe B.A."/>
            <person name="Wu M."/>
            <person name="Heidelberg J.F."/>
            <person name="Paulsen I.T."/>
            <person name="Fouts D.E."/>
            <person name="Ravel J."/>
            <person name="Tettelin H."/>
            <person name="Ren Q."/>
            <person name="Read T.D."/>
            <person name="DeBoy R.T."/>
            <person name="Seshadri R."/>
            <person name="Salzberg S.L."/>
            <person name="Jensen H.B."/>
            <person name="Birkeland N.K."/>
            <person name="Nelson W.C."/>
            <person name="Dodson R.J."/>
            <person name="Grindhaug S.H."/>
            <person name="Holt I.E."/>
            <person name="Eidhammer I."/>
            <person name="Jonasen I."/>
            <person name="Vanaken S."/>
            <person name="Utterback T.R."/>
            <person name="Feldblyum T.V."/>
            <person name="Fraser C.M."/>
            <person name="Lillehaug J.R."/>
            <person name="Eisen J.A."/>
        </authorList>
    </citation>
    <scope>NUCLEOTIDE SEQUENCE [LARGE SCALE GENOMIC DNA]</scope>
    <source>
        <strain>ATCC 33009 / NCIMB 11132 / Bath</strain>
    </source>
</reference>
<feature type="chain" id="PRO_0000165555" description="Holliday junction branch migration complex subunit RuvB">
    <location>
        <begin position="1"/>
        <end position="345"/>
    </location>
</feature>
<feature type="region of interest" description="Large ATPase domain (RuvB-L)" evidence="1">
    <location>
        <begin position="1"/>
        <end position="183"/>
    </location>
</feature>
<feature type="region of interest" description="Small ATPAse domain (RuvB-S)" evidence="1">
    <location>
        <begin position="184"/>
        <end position="254"/>
    </location>
</feature>
<feature type="region of interest" description="Head domain (RuvB-H)" evidence="1">
    <location>
        <begin position="257"/>
        <end position="345"/>
    </location>
</feature>
<feature type="binding site" evidence="1">
    <location>
        <position position="22"/>
    </location>
    <ligand>
        <name>ATP</name>
        <dbReference type="ChEBI" id="CHEBI:30616"/>
    </ligand>
</feature>
<feature type="binding site" evidence="1">
    <location>
        <position position="23"/>
    </location>
    <ligand>
        <name>ATP</name>
        <dbReference type="ChEBI" id="CHEBI:30616"/>
    </ligand>
</feature>
<feature type="binding site" evidence="1">
    <location>
        <position position="64"/>
    </location>
    <ligand>
        <name>ATP</name>
        <dbReference type="ChEBI" id="CHEBI:30616"/>
    </ligand>
</feature>
<feature type="binding site" evidence="1">
    <location>
        <position position="67"/>
    </location>
    <ligand>
        <name>ATP</name>
        <dbReference type="ChEBI" id="CHEBI:30616"/>
    </ligand>
</feature>
<feature type="binding site" evidence="1">
    <location>
        <position position="68"/>
    </location>
    <ligand>
        <name>ATP</name>
        <dbReference type="ChEBI" id="CHEBI:30616"/>
    </ligand>
</feature>
<feature type="binding site" evidence="1">
    <location>
        <position position="68"/>
    </location>
    <ligand>
        <name>Mg(2+)</name>
        <dbReference type="ChEBI" id="CHEBI:18420"/>
    </ligand>
</feature>
<feature type="binding site" evidence="1">
    <location>
        <position position="69"/>
    </location>
    <ligand>
        <name>ATP</name>
        <dbReference type="ChEBI" id="CHEBI:30616"/>
    </ligand>
</feature>
<feature type="binding site" evidence="1">
    <location>
        <begin position="130"/>
        <end position="132"/>
    </location>
    <ligand>
        <name>ATP</name>
        <dbReference type="ChEBI" id="CHEBI:30616"/>
    </ligand>
</feature>
<feature type="binding site" evidence="1">
    <location>
        <position position="173"/>
    </location>
    <ligand>
        <name>ATP</name>
        <dbReference type="ChEBI" id="CHEBI:30616"/>
    </ligand>
</feature>
<feature type="binding site" evidence="1">
    <location>
        <position position="183"/>
    </location>
    <ligand>
        <name>ATP</name>
        <dbReference type="ChEBI" id="CHEBI:30616"/>
    </ligand>
</feature>
<feature type="binding site" evidence="1">
    <location>
        <position position="220"/>
    </location>
    <ligand>
        <name>ATP</name>
        <dbReference type="ChEBI" id="CHEBI:30616"/>
    </ligand>
</feature>
<feature type="binding site" evidence="1">
    <location>
        <position position="293"/>
    </location>
    <ligand>
        <name>DNA</name>
        <dbReference type="ChEBI" id="CHEBI:16991"/>
    </ligand>
</feature>
<feature type="binding site" evidence="1">
    <location>
        <position position="312"/>
    </location>
    <ligand>
        <name>DNA</name>
        <dbReference type="ChEBI" id="CHEBI:16991"/>
    </ligand>
</feature>
<feature type="binding site" evidence="1">
    <location>
        <position position="317"/>
    </location>
    <ligand>
        <name>DNA</name>
        <dbReference type="ChEBI" id="CHEBI:16991"/>
    </ligand>
</feature>
<keyword id="KW-0067">ATP-binding</keyword>
<keyword id="KW-0963">Cytoplasm</keyword>
<keyword id="KW-0227">DNA damage</keyword>
<keyword id="KW-0233">DNA recombination</keyword>
<keyword id="KW-0234">DNA repair</keyword>
<keyword id="KW-0238">DNA-binding</keyword>
<keyword id="KW-0378">Hydrolase</keyword>
<keyword id="KW-0547">Nucleotide-binding</keyword>
<keyword id="KW-1185">Reference proteome</keyword>
<organism>
    <name type="scientific">Methylococcus capsulatus (strain ATCC 33009 / NCIMB 11132 / Bath)</name>
    <dbReference type="NCBI Taxonomy" id="243233"/>
    <lineage>
        <taxon>Bacteria</taxon>
        <taxon>Pseudomonadati</taxon>
        <taxon>Pseudomonadota</taxon>
        <taxon>Gammaproteobacteria</taxon>
        <taxon>Methylococcales</taxon>
        <taxon>Methylococcaceae</taxon>
        <taxon>Methylococcus</taxon>
    </lineage>
</organism>
<protein>
    <recommendedName>
        <fullName evidence="1">Holliday junction branch migration complex subunit RuvB</fullName>
        <ecNumber evidence="1">3.6.4.-</ecNumber>
    </recommendedName>
</protein>
<evidence type="ECO:0000255" key="1">
    <source>
        <dbReference type="HAMAP-Rule" id="MF_00016"/>
    </source>
</evidence>
<dbReference type="EC" id="3.6.4.-" evidence="1"/>
<dbReference type="EMBL" id="AE017282">
    <property type="protein sequence ID" value="AAU92522.1"/>
    <property type="molecule type" value="Genomic_DNA"/>
</dbReference>
<dbReference type="RefSeq" id="WP_010960507.1">
    <property type="nucleotide sequence ID" value="NC_002977.6"/>
</dbReference>
<dbReference type="SMR" id="Q609L0"/>
<dbReference type="STRING" id="243233.MCA1223"/>
<dbReference type="GeneID" id="88223509"/>
<dbReference type="KEGG" id="mca:MCA1223"/>
<dbReference type="eggNOG" id="COG2255">
    <property type="taxonomic scope" value="Bacteria"/>
</dbReference>
<dbReference type="HOGENOM" id="CLU_055599_1_0_6"/>
<dbReference type="Proteomes" id="UP000006821">
    <property type="component" value="Chromosome"/>
</dbReference>
<dbReference type="GO" id="GO:0005737">
    <property type="term" value="C:cytoplasm"/>
    <property type="evidence" value="ECO:0007669"/>
    <property type="project" value="UniProtKB-SubCell"/>
</dbReference>
<dbReference type="GO" id="GO:0048476">
    <property type="term" value="C:Holliday junction resolvase complex"/>
    <property type="evidence" value="ECO:0007669"/>
    <property type="project" value="UniProtKB-UniRule"/>
</dbReference>
<dbReference type="GO" id="GO:0005524">
    <property type="term" value="F:ATP binding"/>
    <property type="evidence" value="ECO:0007669"/>
    <property type="project" value="UniProtKB-UniRule"/>
</dbReference>
<dbReference type="GO" id="GO:0016887">
    <property type="term" value="F:ATP hydrolysis activity"/>
    <property type="evidence" value="ECO:0007669"/>
    <property type="project" value="InterPro"/>
</dbReference>
<dbReference type="GO" id="GO:0000400">
    <property type="term" value="F:four-way junction DNA binding"/>
    <property type="evidence" value="ECO:0007669"/>
    <property type="project" value="UniProtKB-UniRule"/>
</dbReference>
<dbReference type="GO" id="GO:0009378">
    <property type="term" value="F:four-way junction helicase activity"/>
    <property type="evidence" value="ECO:0007669"/>
    <property type="project" value="InterPro"/>
</dbReference>
<dbReference type="GO" id="GO:0006310">
    <property type="term" value="P:DNA recombination"/>
    <property type="evidence" value="ECO:0007669"/>
    <property type="project" value="UniProtKB-UniRule"/>
</dbReference>
<dbReference type="GO" id="GO:0006281">
    <property type="term" value="P:DNA repair"/>
    <property type="evidence" value="ECO:0007669"/>
    <property type="project" value="UniProtKB-UniRule"/>
</dbReference>
<dbReference type="CDD" id="cd00009">
    <property type="entry name" value="AAA"/>
    <property type="match status" value="1"/>
</dbReference>
<dbReference type="FunFam" id="1.10.10.10:FF:000086">
    <property type="entry name" value="Holliday junction ATP-dependent DNA helicase RuvB"/>
    <property type="match status" value="1"/>
</dbReference>
<dbReference type="FunFam" id="1.10.8.60:FF:000023">
    <property type="entry name" value="Holliday junction ATP-dependent DNA helicase RuvB"/>
    <property type="match status" value="1"/>
</dbReference>
<dbReference type="FunFam" id="3.40.50.300:FF:000073">
    <property type="entry name" value="Holliday junction ATP-dependent DNA helicase RuvB"/>
    <property type="match status" value="1"/>
</dbReference>
<dbReference type="Gene3D" id="1.10.8.60">
    <property type="match status" value="1"/>
</dbReference>
<dbReference type="Gene3D" id="3.40.50.300">
    <property type="entry name" value="P-loop containing nucleotide triphosphate hydrolases"/>
    <property type="match status" value="1"/>
</dbReference>
<dbReference type="Gene3D" id="1.10.10.10">
    <property type="entry name" value="Winged helix-like DNA-binding domain superfamily/Winged helix DNA-binding domain"/>
    <property type="match status" value="1"/>
</dbReference>
<dbReference type="HAMAP" id="MF_00016">
    <property type="entry name" value="DNA_HJ_migration_RuvB"/>
    <property type="match status" value="1"/>
</dbReference>
<dbReference type="InterPro" id="IPR003593">
    <property type="entry name" value="AAA+_ATPase"/>
</dbReference>
<dbReference type="InterPro" id="IPR041445">
    <property type="entry name" value="AAA_lid_4"/>
</dbReference>
<dbReference type="InterPro" id="IPR004605">
    <property type="entry name" value="DNA_helicase_Holl-junc_RuvB"/>
</dbReference>
<dbReference type="InterPro" id="IPR027417">
    <property type="entry name" value="P-loop_NTPase"/>
</dbReference>
<dbReference type="InterPro" id="IPR008824">
    <property type="entry name" value="RuvB-like_N"/>
</dbReference>
<dbReference type="InterPro" id="IPR008823">
    <property type="entry name" value="RuvB_C"/>
</dbReference>
<dbReference type="InterPro" id="IPR036388">
    <property type="entry name" value="WH-like_DNA-bd_sf"/>
</dbReference>
<dbReference type="InterPro" id="IPR036390">
    <property type="entry name" value="WH_DNA-bd_sf"/>
</dbReference>
<dbReference type="NCBIfam" id="NF000868">
    <property type="entry name" value="PRK00080.1"/>
    <property type="match status" value="1"/>
</dbReference>
<dbReference type="NCBIfam" id="TIGR00635">
    <property type="entry name" value="ruvB"/>
    <property type="match status" value="1"/>
</dbReference>
<dbReference type="PANTHER" id="PTHR42848">
    <property type="match status" value="1"/>
</dbReference>
<dbReference type="PANTHER" id="PTHR42848:SF1">
    <property type="entry name" value="HOLLIDAY JUNCTION BRANCH MIGRATION COMPLEX SUBUNIT RUVB"/>
    <property type="match status" value="1"/>
</dbReference>
<dbReference type="Pfam" id="PF17864">
    <property type="entry name" value="AAA_lid_4"/>
    <property type="match status" value="1"/>
</dbReference>
<dbReference type="Pfam" id="PF05491">
    <property type="entry name" value="RuvB_C"/>
    <property type="match status" value="1"/>
</dbReference>
<dbReference type="Pfam" id="PF05496">
    <property type="entry name" value="RuvB_N"/>
    <property type="match status" value="1"/>
</dbReference>
<dbReference type="SMART" id="SM00382">
    <property type="entry name" value="AAA"/>
    <property type="match status" value="1"/>
</dbReference>
<dbReference type="SUPFAM" id="SSF52540">
    <property type="entry name" value="P-loop containing nucleoside triphosphate hydrolases"/>
    <property type="match status" value="1"/>
</dbReference>
<dbReference type="SUPFAM" id="SSF46785">
    <property type="entry name" value="Winged helix' DNA-binding domain"/>
    <property type="match status" value="1"/>
</dbReference>
<accession>Q609L0</accession>
<comment type="function">
    <text evidence="1">The RuvA-RuvB-RuvC complex processes Holliday junction (HJ) DNA during genetic recombination and DNA repair, while the RuvA-RuvB complex plays an important role in the rescue of blocked DNA replication forks via replication fork reversal (RFR). RuvA specifically binds to HJ cruciform DNA, conferring on it an open structure. The RuvB hexamer acts as an ATP-dependent pump, pulling dsDNA into and through the RuvAB complex. RuvB forms 2 homohexamers on either side of HJ DNA bound by 1 or 2 RuvA tetramers; 4 subunits per hexamer contact DNA at a time. Coordinated motions by a converter formed by DNA-disengaged RuvB subunits stimulates ATP hydrolysis and nucleotide exchange. Immobilization of the converter enables RuvB to convert the ATP-contained energy into a lever motion, pulling 2 nucleotides of DNA out of the RuvA tetramer per ATP hydrolyzed, thus driving DNA branch migration. The RuvB motors rotate together with the DNA substrate, which together with the progressing nucleotide cycle form the mechanistic basis for DNA recombination by continuous HJ branch migration. Branch migration allows RuvC to scan DNA until it finds its consensus sequence, where it cleaves and resolves cruciform DNA.</text>
</comment>
<comment type="catalytic activity">
    <reaction evidence="1">
        <text>ATP + H2O = ADP + phosphate + H(+)</text>
        <dbReference type="Rhea" id="RHEA:13065"/>
        <dbReference type="ChEBI" id="CHEBI:15377"/>
        <dbReference type="ChEBI" id="CHEBI:15378"/>
        <dbReference type="ChEBI" id="CHEBI:30616"/>
        <dbReference type="ChEBI" id="CHEBI:43474"/>
        <dbReference type="ChEBI" id="CHEBI:456216"/>
    </reaction>
</comment>
<comment type="subunit">
    <text evidence="1">Homohexamer. Forms an RuvA(8)-RuvB(12)-Holliday junction (HJ) complex. HJ DNA is sandwiched between 2 RuvA tetramers; dsDNA enters through RuvA and exits via RuvB. An RuvB hexamer assembles on each DNA strand where it exits the tetramer. Each RuvB hexamer is contacted by two RuvA subunits (via domain III) on 2 adjacent RuvB subunits; this complex drives branch migration. In the full resolvosome a probable DNA-RuvA(4)-RuvB(12)-RuvC(2) complex forms which resolves the HJ.</text>
</comment>
<comment type="subcellular location">
    <subcellularLocation>
        <location evidence="1">Cytoplasm</location>
    </subcellularLocation>
</comment>
<comment type="domain">
    <text evidence="1">Has 3 domains, the large (RuvB-L) and small ATPase (RuvB-S) domains and the C-terminal head (RuvB-H) domain. The head domain binds DNA, while the ATPase domains jointly bind ATP, ADP or are empty depending on the state of the subunit in the translocation cycle. During a single DNA translocation step the structure of each domain remains the same, but their relative positions change.</text>
</comment>
<comment type="similarity">
    <text evidence="1">Belongs to the RuvB family.</text>
</comment>
<sequence>MTTQRLVSAAGQWDEEAIDRAIRPKRLEDYVGQRAMREQMAIFIQAALGRGEALDHVLIFGPPGLGKTTLANIIANELGVNVRHTSGPVLEKAGDLAALLTNLEPRDVLFIDEIHRLGAVVEEVLYPAMEDYQIDIMIGEGPAARSIKLDLPPFTLVGATTRAGLLTSPLRDRFGIVHRLEFYSVEELSRIVARSARILGSEITPEGAAEVARRSRGTPRIANRLLRRVRDFAQVMADGRITGEVAGKALEMLDVDPNGFDQSDRRLLLTMMEKFEGGPVGLDNLAAAIGEERGTIEDVLEPYLIQQGFIMRTPRGRVATRNAYLHFGLKPPQRTNVNEELFGDE</sequence>
<gene>
    <name evidence="1" type="primary">ruvB</name>
    <name type="ordered locus">MCA1223</name>
</gene>
<name>RUVB_METCA</name>
<proteinExistence type="inferred from homology"/>